<reference key="1">
    <citation type="submission" date="2009-01" db="EMBL/GenBank/DDBJ databases">
        <title>Complete sequence of Anaeromyxobacter dehalogenans 2CP-1.</title>
        <authorList>
            <person name="Lucas S."/>
            <person name="Copeland A."/>
            <person name="Lapidus A."/>
            <person name="Glavina del Rio T."/>
            <person name="Dalin E."/>
            <person name="Tice H."/>
            <person name="Bruce D."/>
            <person name="Goodwin L."/>
            <person name="Pitluck S."/>
            <person name="Saunders E."/>
            <person name="Brettin T."/>
            <person name="Detter J.C."/>
            <person name="Han C."/>
            <person name="Larimer F."/>
            <person name="Land M."/>
            <person name="Hauser L."/>
            <person name="Kyrpides N."/>
            <person name="Ovchinnikova G."/>
            <person name="Beliaev A.S."/>
            <person name="Richardson P."/>
        </authorList>
    </citation>
    <scope>NUCLEOTIDE SEQUENCE [LARGE SCALE GENOMIC DNA]</scope>
    <source>
        <strain>2CP-1 / ATCC BAA-258</strain>
    </source>
</reference>
<name>RSMH_ANAD2</name>
<gene>
    <name evidence="1" type="primary">rsmH</name>
    <name type="synonym">mraW</name>
    <name type="ordered locus">A2cp1_3903</name>
</gene>
<comment type="function">
    <text evidence="1">Specifically methylates the N4 position of cytidine in position 1402 (C1402) of 16S rRNA.</text>
</comment>
<comment type="catalytic activity">
    <reaction evidence="1">
        <text>cytidine(1402) in 16S rRNA + S-adenosyl-L-methionine = N(4)-methylcytidine(1402) in 16S rRNA + S-adenosyl-L-homocysteine + H(+)</text>
        <dbReference type="Rhea" id="RHEA:42928"/>
        <dbReference type="Rhea" id="RHEA-COMP:10286"/>
        <dbReference type="Rhea" id="RHEA-COMP:10287"/>
        <dbReference type="ChEBI" id="CHEBI:15378"/>
        <dbReference type="ChEBI" id="CHEBI:57856"/>
        <dbReference type="ChEBI" id="CHEBI:59789"/>
        <dbReference type="ChEBI" id="CHEBI:74506"/>
        <dbReference type="ChEBI" id="CHEBI:82748"/>
        <dbReference type="EC" id="2.1.1.199"/>
    </reaction>
</comment>
<comment type="subcellular location">
    <subcellularLocation>
        <location evidence="1">Cytoplasm</location>
    </subcellularLocation>
</comment>
<comment type="similarity">
    <text evidence="1">Belongs to the methyltransferase superfamily. RsmH family.</text>
</comment>
<dbReference type="EC" id="2.1.1.199" evidence="1"/>
<dbReference type="EMBL" id="CP001359">
    <property type="protein sequence ID" value="ACL67226.1"/>
    <property type="molecule type" value="Genomic_DNA"/>
</dbReference>
<dbReference type="RefSeq" id="WP_015934960.1">
    <property type="nucleotide sequence ID" value="NC_011891.1"/>
</dbReference>
<dbReference type="SMR" id="B8J8E0"/>
<dbReference type="KEGG" id="acp:A2cp1_3903"/>
<dbReference type="HOGENOM" id="CLU_038422_3_0_7"/>
<dbReference type="Proteomes" id="UP000007089">
    <property type="component" value="Chromosome"/>
</dbReference>
<dbReference type="GO" id="GO:0005737">
    <property type="term" value="C:cytoplasm"/>
    <property type="evidence" value="ECO:0007669"/>
    <property type="project" value="UniProtKB-SubCell"/>
</dbReference>
<dbReference type="GO" id="GO:0071424">
    <property type="term" value="F:rRNA (cytosine-N4-)-methyltransferase activity"/>
    <property type="evidence" value="ECO:0007669"/>
    <property type="project" value="UniProtKB-UniRule"/>
</dbReference>
<dbReference type="GO" id="GO:0070475">
    <property type="term" value="P:rRNA base methylation"/>
    <property type="evidence" value="ECO:0007669"/>
    <property type="project" value="UniProtKB-UniRule"/>
</dbReference>
<dbReference type="Gene3D" id="1.10.150.170">
    <property type="entry name" value="Putative methyltransferase TM0872, insert domain"/>
    <property type="match status" value="1"/>
</dbReference>
<dbReference type="Gene3D" id="3.40.50.150">
    <property type="entry name" value="Vaccinia Virus protein VP39"/>
    <property type="match status" value="1"/>
</dbReference>
<dbReference type="HAMAP" id="MF_01007">
    <property type="entry name" value="16SrRNA_methyltr_H"/>
    <property type="match status" value="1"/>
</dbReference>
<dbReference type="InterPro" id="IPR002903">
    <property type="entry name" value="RsmH"/>
</dbReference>
<dbReference type="InterPro" id="IPR023397">
    <property type="entry name" value="SAM-dep_MeTrfase_MraW_recog"/>
</dbReference>
<dbReference type="InterPro" id="IPR029063">
    <property type="entry name" value="SAM-dependent_MTases_sf"/>
</dbReference>
<dbReference type="NCBIfam" id="TIGR00006">
    <property type="entry name" value="16S rRNA (cytosine(1402)-N(4))-methyltransferase RsmH"/>
    <property type="match status" value="1"/>
</dbReference>
<dbReference type="PANTHER" id="PTHR11265:SF0">
    <property type="entry name" value="12S RRNA N4-METHYLCYTIDINE METHYLTRANSFERASE"/>
    <property type="match status" value="1"/>
</dbReference>
<dbReference type="PANTHER" id="PTHR11265">
    <property type="entry name" value="S-ADENOSYL-METHYLTRANSFERASE MRAW"/>
    <property type="match status" value="1"/>
</dbReference>
<dbReference type="Pfam" id="PF01795">
    <property type="entry name" value="Methyltransf_5"/>
    <property type="match status" value="1"/>
</dbReference>
<dbReference type="PIRSF" id="PIRSF004486">
    <property type="entry name" value="MraW"/>
    <property type="match status" value="1"/>
</dbReference>
<dbReference type="SUPFAM" id="SSF81799">
    <property type="entry name" value="Putative methyltransferase TM0872, insert domain"/>
    <property type="match status" value="1"/>
</dbReference>
<dbReference type="SUPFAM" id="SSF53335">
    <property type="entry name" value="S-adenosyl-L-methionine-dependent methyltransferases"/>
    <property type="match status" value="1"/>
</dbReference>
<keyword id="KW-0963">Cytoplasm</keyword>
<keyword id="KW-0489">Methyltransferase</keyword>
<keyword id="KW-0698">rRNA processing</keyword>
<keyword id="KW-0949">S-adenosyl-L-methionine</keyword>
<keyword id="KW-0808">Transferase</keyword>
<sequence length="310" mass="33386">MSADFRHEPVLANEILELLRPRPGELFLDGTLGGGGHSGLLLEAGARVIALDKDPRALAAATARLARFGEAFRAVRSDFRDAKNVLEALGIAAVDGALVDLGVSSPQLDEAERGFSFSRPGPLDMRMGDTGETLEDLLRRIDERELARILREYGEEPFARPVARAVKAALETEAPLDTARLAEVVAGAIPRKAWPHRIHPATRTFQALRIAVNDELGALAAWLDGLPGVLAPGGRAAAISFHSLEDRMVKEKFRALTQACTCPPDLPVCACGAKASFAAITRKAVKASDEEIARNPRARSARLRAVEKLR</sequence>
<protein>
    <recommendedName>
        <fullName evidence="1">Ribosomal RNA small subunit methyltransferase H</fullName>
        <ecNumber evidence="1">2.1.1.199</ecNumber>
    </recommendedName>
    <alternativeName>
        <fullName evidence="1">16S rRNA m(4)C1402 methyltransferase</fullName>
    </alternativeName>
    <alternativeName>
        <fullName evidence="1">rRNA (cytosine-N(4)-)-methyltransferase RsmH</fullName>
    </alternativeName>
</protein>
<proteinExistence type="inferred from homology"/>
<evidence type="ECO:0000255" key="1">
    <source>
        <dbReference type="HAMAP-Rule" id="MF_01007"/>
    </source>
</evidence>
<accession>B8J8E0</accession>
<feature type="chain" id="PRO_0000386713" description="Ribosomal RNA small subunit methyltransferase H">
    <location>
        <begin position="1"/>
        <end position="310"/>
    </location>
</feature>
<feature type="binding site" evidence="1">
    <location>
        <begin position="35"/>
        <end position="37"/>
    </location>
    <ligand>
        <name>S-adenosyl-L-methionine</name>
        <dbReference type="ChEBI" id="CHEBI:59789"/>
    </ligand>
</feature>
<feature type="binding site" evidence="1">
    <location>
        <position position="52"/>
    </location>
    <ligand>
        <name>S-adenosyl-L-methionine</name>
        <dbReference type="ChEBI" id="CHEBI:59789"/>
    </ligand>
</feature>
<feature type="binding site" evidence="1">
    <location>
        <position position="79"/>
    </location>
    <ligand>
        <name>S-adenosyl-L-methionine</name>
        <dbReference type="ChEBI" id="CHEBI:59789"/>
    </ligand>
</feature>
<feature type="binding site" evidence="1">
    <location>
        <position position="100"/>
    </location>
    <ligand>
        <name>S-adenosyl-L-methionine</name>
        <dbReference type="ChEBI" id="CHEBI:59789"/>
    </ligand>
</feature>
<feature type="binding site" evidence="1">
    <location>
        <position position="107"/>
    </location>
    <ligand>
        <name>S-adenosyl-L-methionine</name>
        <dbReference type="ChEBI" id="CHEBI:59789"/>
    </ligand>
</feature>
<organism>
    <name type="scientific">Anaeromyxobacter dehalogenans (strain 2CP-1 / ATCC BAA-258)</name>
    <dbReference type="NCBI Taxonomy" id="455488"/>
    <lineage>
        <taxon>Bacteria</taxon>
        <taxon>Pseudomonadati</taxon>
        <taxon>Myxococcota</taxon>
        <taxon>Myxococcia</taxon>
        <taxon>Myxococcales</taxon>
        <taxon>Cystobacterineae</taxon>
        <taxon>Anaeromyxobacteraceae</taxon>
        <taxon>Anaeromyxobacter</taxon>
    </lineage>
</organism>